<reference key="1">
    <citation type="journal article" date="1994" name="Plant Physiol.">
        <title>Sequence of a cDNA from Linum usitatissimum encoding the stearoyl-acyl carrier protein desaturase.</title>
        <authorList>
            <person name="Singh S.P."/>
            <person name="McKinney S."/>
            <person name="Green A."/>
        </authorList>
    </citation>
    <scope>NUCLEOTIDE SEQUENCE [MRNA]</scope>
</reference>
<dbReference type="EC" id="1.14.19.2" evidence="2"/>
<dbReference type="EMBL" id="X70962">
    <property type="protein sequence ID" value="CAA50298.1"/>
    <property type="molecule type" value="mRNA"/>
</dbReference>
<dbReference type="PIR" id="S31959">
    <property type="entry name" value="S31959"/>
</dbReference>
<dbReference type="SMR" id="P32062"/>
<dbReference type="UniPathway" id="UPA00199"/>
<dbReference type="GO" id="GO:0009570">
    <property type="term" value="C:chloroplast stroma"/>
    <property type="evidence" value="ECO:0007669"/>
    <property type="project" value="TreeGrafter"/>
</dbReference>
<dbReference type="GO" id="GO:0046872">
    <property type="term" value="F:metal ion binding"/>
    <property type="evidence" value="ECO:0007669"/>
    <property type="project" value="UniProtKB-KW"/>
</dbReference>
<dbReference type="GO" id="GO:0045300">
    <property type="term" value="F:stearoyl-[ACP] desaturase activity"/>
    <property type="evidence" value="ECO:0007669"/>
    <property type="project" value="UniProtKB-EC"/>
</dbReference>
<dbReference type="GO" id="GO:0006633">
    <property type="term" value="P:fatty acid biosynthetic process"/>
    <property type="evidence" value="ECO:0007669"/>
    <property type="project" value="UniProtKB-KW"/>
</dbReference>
<dbReference type="CDD" id="cd01050">
    <property type="entry name" value="Acyl_ACP_Desat"/>
    <property type="match status" value="1"/>
</dbReference>
<dbReference type="FunFam" id="1.10.620.20:FF:000002">
    <property type="entry name" value="Stearoyl-[acyl-carrier-protein] 9-desaturase, chloroplastic"/>
    <property type="match status" value="1"/>
</dbReference>
<dbReference type="Gene3D" id="1.10.620.20">
    <property type="entry name" value="Ribonucleotide Reductase, subunit A"/>
    <property type="match status" value="1"/>
</dbReference>
<dbReference type="InterPro" id="IPR005803">
    <property type="entry name" value="FADS-2_CS"/>
</dbReference>
<dbReference type="InterPro" id="IPR005067">
    <property type="entry name" value="Fatty_acid_desaturase-2"/>
</dbReference>
<dbReference type="InterPro" id="IPR009078">
    <property type="entry name" value="Ferritin-like_SF"/>
</dbReference>
<dbReference type="InterPro" id="IPR012348">
    <property type="entry name" value="RNR-like"/>
</dbReference>
<dbReference type="PANTHER" id="PTHR31155">
    <property type="entry name" value="ACYL- ACYL-CARRIER-PROTEIN DESATURASE-RELATED"/>
    <property type="match status" value="1"/>
</dbReference>
<dbReference type="PANTHER" id="PTHR31155:SF27">
    <property type="entry name" value="STEAROYL-[ACYL-CARRIER-PROTEIN] 9-DESATURASE 5, CHLOROPLASTIC"/>
    <property type="match status" value="1"/>
</dbReference>
<dbReference type="Pfam" id="PF03405">
    <property type="entry name" value="FA_desaturase_2"/>
    <property type="match status" value="1"/>
</dbReference>
<dbReference type="PIRSF" id="PIRSF000346">
    <property type="entry name" value="Dlt9_acylACP_des"/>
    <property type="match status" value="1"/>
</dbReference>
<dbReference type="SUPFAM" id="SSF47240">
    <property type="entry name" value="Ferritin-like"/>
    <property type="match status" value="1"/>
</dbReference>
<dbReference type="PROSITE" id="PS00574">
    <property type="entry name" value="FATTY_ACID_DESATUR_2"/>
    <property type="match status" value="1"/>
</dbReference>
<evidence type="ECO:0000250" key="1">
    <source>
        <dbReference type="UniProtKB" id="P22243"/>
    </source>
</evidence>
<evidence type="ECO:0000250" key="2">
    <source>
        <dbReference type="UniProtKB" id="P22337"/>
    </source>
</evidence>
<evidence type="ECO:0000305" key="3"/>
<keyword id="KW-0150">Chloroplast</keyword>
<keyword id="KW-0275">Fatty acid biosynthesis</keyword>
<keyword id="KW-0276">Fatty acid metabolism</keyword>
<keyword id="KW-0408">Iron</keyword>
<keyword id="KW-0444">Lipid biosynthesis</keyword>
<keyword id="KW-0443">Lipid metabolism</keyword>
<keyword id="KW-0479">Metal-binding</keyword>
<keyword id="KW-0560">Oxidoreductase</keyword>
<keyword id="KW-0934">Plastid</keyword>
<keyword id="KW-0809">Transit peptide</keyword>
<proteinExistence type="evidence at transcript level"/>
<feature type="transit peptide" description="Chloroplast" evidence="1">
    <location>
        <begin position="1"/>
        <end position="32"/>
    </location>
</feature>
<feature type="chain" id="PRO_0000007134" description="Stearoyl-[acyl-carrier-protein] 9-desaturase, chloroplastic">
    <location>
        <begin position="33"/>
        <end position="396"/>
    </location>
</feature>
<feature type="binding site" evidence="2">
    <location>
        <position position="138"/>
    </location>
    <ligand>
        <name>Fe cation</name>
        <dbReference type="ChEBI" id="CHEBI:24875"/>
        <label>1</label>
    </ligand>
</feature>
<feature type="binding site" evidence="2">
    <location>
        <position position="176"/>
    </location>
    <ligand>
        <name>Fe cation</name>
        <dbReference type="ChEBI" id="CHEBI:24875"/>
        <label>1</label>
    </ligand>
</feature>
<feature type="binding site" evidence="2">
    <location>
        <position position="176"/>
    </location>
    <ligand>
        <name>Fe cation</name>
        <dbReference type="ChEBI" id="CHEBI:24875"/>
        <label>2</label>
    </ligand>
</feature>
<feature type="binding site" evidence="2">
    <location>
        <position position="179"/>
    </location>
    <ligand>
        <name>Fe cation</name>
        <dbReference type="ChEBI" id="CHEBI:24875"/>
        <label>1</label>
    </ligand>
</feature>
<feature type="binding site" evidence="2">
    <location>
        <position position="229"/>
    </location>
    <ligand>
        <name>Fe cation</name>
        <dbReference type="ChEBI" id="CHEBI:24875"/>
        <label>2</label>
    </ligand>
</feature>
<feature type="binding site" evidence="2">
    <location>
        <position position="262"/>
    </location>
    <ligand>
        <name>Fe cation</name>
        <dbReference type="ChEBI" id="CHEBI:24875"/>
        <label>1</label>
    </ligand>
</feature>
<feature type="binding site" evidence="2">
    <location>
        <position position="262"/>
    </location>
    <ligand>
        <name>Fe cation</name>
        <dbReference type="ChEBI" id="CHEBI:24875"/>
        <label>2</label>
    </ligand>
</feature>
<feature type="binding site" evidence="2">
    <location>
        <position position="265"/>
    </location>
    <ligand>
        <name>Fe cation</name>
        <dbReference type="ChEBI" id="CHEBI:24875"/>
        <label>2</label>
    </ligand>
</feature>
<organism>
    <name type="scientific">Linum usitatissimum</name>
    <name type="common">Flax</name>
    <name type="synonym">Linum humile</name>
    <dbReference type="NCBI Taxonomy" id="4006"/>
    <lineage>
        <taxon>Eukaryota</taxon>
        <taxon>Viridiplantae</taxon>
        <taxon>Streptophyta</taxon>
        <taxon>Embryophyta</taxon>
        <taxon>Tracheophyta</taxon>
        <taxon>Spermatophyta</taxon>
        <taxon>Magnoliopsida</taxon>
        <taxon>eudicotyledons</taxon>
        <taxon>Gunneridae</taxon>
        <taxon>Pentapetalae</taxon>
        <taxon>rosids</taxon>
        <taxon>fabids</taxon>
        <taxon>Malpighiales</taxon>
        <taxon>Linaceae</taxon>
        <taxon>Linum</taxon>
    </lineage>
</organism>
<accession>P32062</accession>
<sequence length="396" mass="44655">MALKLNPVTTFPSTRSLNNFSSRSPRTFLMAASTFSSTSTKEAEAKEVTWTTKRGAYASDPFHAPTGSWEIFKSLGRLGLRDVLISHLKPVEKCWQPQDFLPEPESDGFEEQVKELRARAKELPDDYFVVLVGDMITEEALPTYQTMLNTLDGVRDETGASLTPWAIWTRAWTAEENRHGDLLNKYLYLSGRVDMRQIEKTIQYLIGSGMDPKTENNPYLGFIYTSFQERATFISHGNTARLAKDHGDMKLAQICGIIAADEKRHETAYTKIVEKLFEIDPDGTVLALADMMRKKISMPAHLMYDGEDDNLFDNYSSVAQRIGDTAKDYADILEFLVGRWKVDAFTGLSGEGNKAQDFVCGLPARIRKLEERAAGRAKQTSKSVPFSWIFSRELVL</sequence>
<name>STAD_LINUS</name>
<protein>
    <recommendedName>
        <fullName>Stearoyl-[acyl-carrier-protein] 9-desaturase, chloroplastic</fullName>
        <shortName>Stearoyl-ACP desaturase</shortName>
        <ecNumber evidence="2">1.14.19.2</ecNumber>
    </recommendedName>
    <alternativeName>
        <fullName>Acyl-[acyl-carrier-protein] desaturase</fullName>
    </alternativeName>
</protein>
<comment type="function">
    <text evidence="2">Converts stearoyl-ACP to oleoyl-ACP by introduction of a cis double bond between carbons 9 and 10 of the acyl chain.</text>
</comment>
<comment type="catalytic activity">
    <reaction evidence="2">
        <text>octadecanoyl-[ACP] + 2 reduced [2Fe-2S]-[ferredoxin] + O2 + 2 H(+) = (9Z)-octadecenoyl-[ACP] + 2 oxidized [2Fe-2S]-[ferredoxin] + 2 H2O</text>
        <dbReference type="Rhea" id="RHEA:11776"/>
        <dbReference type="Rhea" id="RHEA-COMP:9656"/>
        <dbReference type="Rhea" id="RHEA-COMP:9924"/>
        <dbReference type="Rhea" id="RHEA-COMP:10000"/>
        <dbReference type="Rhea" id="RHEA-COMP:10001"/>
        <dbReference type="ChEBI" id="CHEBI:15377"/>
        <dbReference type="ChEBI" id="CHEBI:15378"/>
        <dbReference type="ChEBI" id="CHEBI:15379"/>
        <dbReference type="ChEBI" id="CHEBI:33737"/>
        <dbReference type="ChEBI" id="CHEBI:33738"/>
        <dbReference type="ChEBI" id="CHEBI:78495"/>
        <dbReference type="ChEBI" id="CHEBI:78783"/>
        <dbReference type="EC" id="1.14.19.2"/>
    </reaction>
</comment>
<comment type="cofactor">
    <cofactor evidence="2">
        <name>Fe(2+)</name>
        <dbReference type="ChEBI" id="CHEBI:29033"/>
    </cofactor>
    <text evidence="2">Binds 2 Fe(2+) ions per subunit.</text>
</comment>
<comment type="pathway">
    <text>Lipid metabolism; fatty acid metabolism.</text>
</comment>
<comment type="subunit">
    <text evidence="2">Homodimer.</text>
</comment>
<comment type="subcellular location">
    <subcellularLocation>
        <location>Plastid</location>
        <location>Chloroplast</location>
    </subcellularLocation>
    <subcellularLocation>
        <location>Plastid</location>
    </subcellularLocation>
    <text>In green tissue, found in chloroplasts. In non-photosynthetic tissue, found in plastids.</text>
</comment>
<comment type="similarity">
    <text evidence="3">Belongs to the fatty acid desaturase type 2 family.</text>
</comment>